<dbReference type="EMBL" id="CP000802">
    <property type="protein sequence ID" value="ABV07822.1"/>
    <property type="molecule type" value="Genomic_DNA"/>
</dbReference>
<dbReference type="RefSeq" id="WP_001295699.1">
    <property type="nucleotide sequence ID" value="NC_009800.1"/>
</dbReference>
<dbReference type="BMRB" id="A8A5L8"/>
<dbReference type="SMR" id="A8A5L8"/>
<dbReference type="GeneID" id="93778588"/>
<dbReference type="KEGG" id="ecx:EcHS_A3607"/>
<dbReference type="HOGENOM" id="CLU_189182_0_0_6"/>
<dbReference type="GO" id="GO:0003677">
    <property type="term" value="F:DNA binding"/>
    <property type="evidence" value="ECO:0007669"/>
    <property type="project" value="UniProtKB-KW"/>
</dbReference>
<dbReference type="GO" id="GO:0005506">
    <property type="term" value="F:iron ion binding"/>
    <property type="evidence" value="ECO:0007669"/>
    <property type="project" value="UniProtKB-UniRule"/>
</dbReference>
<dbReference type="GO" id="GO:0051536">
    <property type="term" value="F:iron-sulfur cluster binding"/>
    <property type="evidence" value="ECO:0007669"/>
    <property type="project" value="UniProtKB-KW"/>
</dbReference>
<dbReference type="Gene3D" id="1.10.10.10">
    <property type="entry name" value="Winged helix-like DNA-binding domain superfamily/Winged helix DNA-binding domain"/>
    <property type="match status" value="1"/>
</dbReference>
<dbReference type="HAMAP" id="MF_01586">
    <property type="entry name" value="FeoC"/>
    <property type="match status" value="1"/>
</dbReference>
<dbReference type="InterPro" id="IPR023732">
    <property type="entry name" value="FeoC"/>
</dbReference>
<dbReference type="InterPro" id="IPR015102">
    <property type="entry name" value="Tscrpt_reg_HTH_FeoC"/>
</dbReference>
<dbReference type="InterPro" id="IPR036388">
    <property type="entry name" value="WH-like_DNA-bd_sf"/>
</dbReference>
<dbReference type="InterPro" id="IPR036390">
    <property type="entry name" value="WH_DNA-bd_sf"/>
</dbReference>
<dbReference type="NCBIfam" id="NF011960">
    <property type="entry name" value="PRK15431.1"/>
    <property type="match status" value="1"/>
</dbReference>
<dbReference type="Pfam" id="PF09012">
    <property type="entry name" value="FeoC"/>
    <property type="match status" value="1"/>
</dbReference>
<dbReference type="SUPFAM" id="SSF46785">
    <property type="entry name" value="Winged helix' DNA-binding domain"/>
    <property type="match status" value="1"/>
</dbReference>
<comment type="function">
    <text evidence="1">May function as a transcriptional regulator that controls feoABC expression.</text>
</comment>
<comment type="similarity">
    <text evidence="1">Belongs to the FeoC family.</text>
</comment>
<accession>A8A5L8</accession>
<protein>
    <recommendedName>
        <fullName evidence="1">Probable [Fe-S]-dependent transcriptional repressor</fullName>
    </recommendedName>
</protein>
<feature type="chain" id="PRO_1000069316" description="Probable [Fe-S]-dependent transcriptional repressor">
    <location>
        <begin position="1"/>
        <end position="78"/>
    </location>
</feature>
<feature type="binding site" evidence="1">
    <location>
        <position position="56"/>
    </location>
    <ligand>
        <name>iron-sulfur cluster</name>
        <dbReference type="ChEBI" id="CHEBI:30408"/>
    </ligand>
</feature>
<feature type="binding site" evidence="1">
    <location>
        <position position="61"/>
    </location>
    <ligand>
        <name>iron-sulfur cluster</name>
        <dbReference type="ChEBI" id="CHEBI:30408"/>
    </ligand>
</feature>
<feature type="binding site" evidence="1">
    <location>
        <position position="64"/>
    </location>
    <ligand>
        <name>iron-sulfur cluster</name>
        <dbReference type="ChEBI" id="CHEBI:30408"/>
    </ligand>
</feature>
<feature type="binding site" evidence="1">
    <location>
        <position position="70"/>
    </location>
    <ligand>
        <name>iron-sulfur cluster</name>
        <dbReference type="ChEBI" id="CHEBI:30408"/>
    </ligand>
</feature>
<proteinExistence type="inferred from homology"/>
<keyword id="KW-0238">DNA-binding</keyword>
<keyword id="KW-0408">Iron</keyword>
<keyword id="KW-0411">Iron-sulfur</keyword>
<keyword id="KW-0479">Metal-binding</keyword>
<keyword id="KW-0678">Repressor</keyword>
<keyword id="KW-0804">Transcription</keyword>
<keyword id="KW-0805">Transcription regulation</keyword>
<name>FEOC_ECOHS</name>
<organism>
    <name type="scientific">Escherichia coli O9:H4 (strain HS)</name>
    <dbReference type="NCBI Taxonomy" id="331112"/>
    <lineage>
        <taxon>Bacteria</taxon>
        <taxon>Pseudomonadati</taxon>
        <taxon>Pseudomonadota</taxon>
        <taxon>Gammaproteobacteria</taxon>
        <taxon>Enterobacterales</taxon>
        <taxon>Enterobacteriaceae</taxon>
        <taxon>Escherichia</taxon>
    </lineage>
</organism>
<evidence type="ECO:0000255" key="1">
    <source>
        <dbReference type="HAMAP-Rule" id="MF_01586"/>
    </source>
</evidence>
<reference key="1">
    <citation type="journal article" date="2008" name="J. Bacteriol.">
        <title>The pangenome structure of Escherichia coli: comparative genomic analysis of E. coli commensal and pathogenic isolates.</title>
        <authorList>
            <person name="Rasko D.A."/>
            <person name="Rosovitz M.J."/>
            <person name="Myers G.S.A."/>
            <person name="Mongodin E.F."/>
            <person name="Fricke W.F."/>
            <person name="Gajer P."/>
            <person name="Crabtree J."/>
            <person name="Sebaihia M."/>
            <person name="Thomson N.R."/>
            <person name="Chaudhuri R."/>
            <person name="Henderson I.R."/>
            <person name="Sperandio V."/>
            <person name="Ravel J."/>
        </authorList>
    </citation>
    <scope>NUCLEOTIDE SEQUENCE [LARGE SCALE GENOMIC DNA]</scope>
    <source>
        <strain>HS</strain>
    </source>
</reference>
<gene>
    <name evidence="1" type="primary">feoC</name>
    <name type="ordered locus">EcHS_A3607</name>
</gene>
<sequence>MASLIQVRDLLALRGRMEATQISQTLNTPQPMINAMLQQLESMGKAVRIQEEPDGCLSGSCKSCPEGKACLREWWALR</sequence>